<organism>
    <name type="scientific">Streptococcus pyogenes serotype M18 (strain MGAS8232)</name>
    <dbReference type="NCBI Taxonomy" id="186103"/>
    <lineage>
        <taxon>Bacteria</taxon>
        <taxon>Bacillati</taxon>
        <taxon>Bacillota</taxon>
        <taxon>Bacilli</taxon>
        <taxon>Lactobacillales</taxon>
        <taxon>Streptococcaceae</taxon>
        <taxon>Streptococcus</taxon>
    </lineage>
</organism>
<comment type="function">
    <text evidence="1">Acts as a chaperone.</text>
</comment>
<comment type="induction">
    <text evidence="1">By stress conditions e.g. heat shock (By similarity).</text>
</comment>
<comment type="similarity">
    <text evidence="3">Belongs to the heat shock protein 70 family.</text>
</comment>
<reference key="1">
    <citation type="journal article" date="2002" name="Proc. Natl. Acad. Sci. U.S.A.">
        <title>Genome sequence and comparative microarray analysis of serotype M18 group A Streptococcus strains associated with acute rheumatic fever outbreaks.</title>
        <authorList>
            <person name="Smoot J.C."/>
            <person name="Barbian K.D."/>
            <person name="Van Gompel J.J."/>
            <person name="Smoot L.M."/>
            <person name="Chaussee M.S."/>
            <person name="Sylva G.L."/>
            <person name="Sturdevant D.E."/>
            <person name="Ricklefs S.M."/>
            <person name="Porcella S.F."/>
            <person name="Parkins L.D."/>
            <person name="Beres S.B."/>
            <person name="Campbell D.S."/>
            <person name="Smith T.M."/>
            <person name="Zhang Q."/>
            <person name="Kapur V."/>
            <person name="Daly J.A."/>
            <person name="Veasy L.G."/>
            <person name="Musser J.M."/>
        </authorList>
    </citation>
    <scope>NUCLEOTIDE SEQUENCE [LARGE SCALE GENOMIC DNA]</scope>
    <source>
        <strain>MGAS8232</strain>
    </source>
</reference>
<sequence>MSKIIGIDLGTTNSAVAVLEGTESKIIANPEGNRTTPSVVSFKNGEIIVGDAAKRQAVTNPETVISIKSKMGTSEKVSANGKEYTPQEISAMILQYLKGYAEDYLGEKVEKAVITVPAYFNDAQRQATKDAGKIAGLEVERIVNEPTAAALAYGMDKTDKDEKILVFDLGGGTFDVSILELGDGVFDVLATAGDNKLGGDDFDQKIIDFLVAEFKKENGIDLSQDKMALQRLKDAAEKAKKDLSGVTQTQISLPFITAGSAGPLHLEMSLSRAKFDDLTRDLVERTKTPVRQALSDAGLSLSEIDEVILVGGSTRIPAVVEAVKAETGKEPNKSVNPDEVVAMGAAIQGGVITGDVKDVVLLDVTPLSLGIETMGGVFTKLIDRNTTIPTSKSQVFSTAADNQPAVDIHVLQGERPMAADNKTLGRFQLTDIPAAPRGIPQIEVTFDIDKNGIVSVKAKDLGTQKEQHIVIKSNDGLSEEEIDRMMKDAEANAEADAKRKEEVDLKNEVDQAIFATEKTIKETEGKGFDTERDAAQSALDELKAAQESGNLDDMKAKLEALNEKAQALAVKMYEQAAAAQQAAQGAEGAQANDSANNDDVVDGEFTEK</sequence>
<dbReference type="EMBL" id="AE009949">
    <property type="protein sequence ID" value="AAL98349.1"/>
    <property type="molecule type" value="Genomic_DNA"/>
</dbReference>
<dbReference type="RefSeq" id="WP_010922599.1">
    <property type="nucleotide sequence ID" value="NC_003485.1"/>
</dbReference>
<dbReference type="SMR" id="P68837"/>
<dbReference type="KEGG" id="spm:spyM18_1831"/>
<dbReference type="HOGENOM" id="CLU_005965_2_4_9"/>
<dbReference type="GO" id="GO:0005524">
    <property type="term" value="F:ATP binding"/>
    <property type="evidence" value="ECO:0007669"/>
    <property type="project" value="UniProtKB-UniRule"/>
</dbReference>
<dbReference type="GO" id="GO:0140662">
    <property type="term" value="F:ATP-dependent protein folding chaperone"/>
    <property type="evidence" value="ECO:0007669"/>
    <property type="project" value="InterPro"/>
</dbReference>
<dbReference type="GO" id="GO:0051082">
    <property type="term" value="F:unfolded protein binding"/>
    <property type="evidence" value="ECO:0007669"/>
    <property type="project" value="InterPro"/>
</dbReference>
<dbReference type="CDD" id="cd10234">
    <property type="entry name" value="ASKHA_NBD_HSP70_DnaK-like"/>
    <property type="match status" value="1"/>
</dbReference>
<dbReference type="FunFam" id="2.60.34.10:FF:000014">
    <property type="entry name" value="Chaperone protein DnaK HSP70"/>
    <property type="match status" value="1"/>
</dbReference>
<dbReference type="FunFam" id="3.30.420.40:FF:000071">
    <property type="entry name" value="Molecular chaperone DnaK"/>
    <property type="match status" value="1"/>
</dbReference>
<dbReference type="FunFam" id="3.90.640.10:FF:000003">
    <property type="entry name" value="Molecular chaperone DnaK"/>
    <property type="match status" value="1"/>
</dbReference>
<dbReference type="Gene3D" id="1.20.1270.10">
    <property type="match status" value="1"/>
</dbReference>
<dbReference type="Gene3D" id="3.30.420.40">
    <property type="match status" value="2"/>
</dbReference>
<dbReference type="Gene3D" id="3.90.640.10">
    <property type="entry name" value="Actin, Chain A, domain 4"/>
    <property type="match status" value="1"/>
</dbReference>
<dbReference type="Gene3D" id="2.60.34.10">
    <property type="entry name" value="Substrate Binding Domain Of DNAk, Chain A, domain 1"/>
    <property type="match status" value="1"/>
</dbReference>
<dbReference type="HAMAP" id="MF_00332">
    <property type="entry name" value="DnaK"/>
    <property type="match status" value="1"/>
</dbReference>
<dbReference type="InterPro" id="IPR043129">
    <property type="entry name" value="ATPase_NBD"/>
</dbReference>
<dbReference type="InterPro" id="IPR012725">
    <property type="entry name" value="Chaperone_DnaK"/>
</dbReference>
<dbReference type="InterPro" id="IPR018181">
    <property type="entry name" value="Heat_shock_70_CS"/>
</dbReference>
<dbReference type="InterPro" id="IPR029048">
    <property type="entry name" value="HSP70_C_sf"/>
</dbReference>
<dbReference type="InterPro" id="IPR029047">
    <property type="entry name" value="HSP70_peptide-bd_sf"/>
</dbReference>
<dbReference type="InterPro" id="IPR013126">
    <property type="entry name" value="Hsp_70_fam"/>
</dbReference>
<dbReference type="NCBIfam" id="NF001413">
    <property type="entry name" value="PRK00290.1"/>
    <property type="match status" value="1"/>
</dbReference>
<dbReference type="NCBIfam" id="TIGR02350">
    <property type="entry name" value="prok_dnaK"/>
    <property type="match status" value="1"/>
</dbReference>
<dbReference type="PANTHER" id="PTHR19375">
    <property type="entry name" value="HEAT SHOCK PROTEIN 70KDA"/>
    <property type="match status" value="1"/>
</dbReference>
<dbReference type="Pfam" id="PF00012">
    <property type="entry name" value="HSP70"/>
    <property type="match status" value="1"/>
</dbReference>
<dbReference type="PRINTS" id="PR00301">
    <property type="entry name" value="HEATSHOCK70"/>
</dbReference>
<dbReference type="SUPFAM" id="SSF53067">
    <property type="entry name" value="Actin-like ATPase domain"/>
    <property type="match status" value="2"/>
</dbReference>
<dbReference type="SUPFAM" id="SSF100934">
    <property type="entry name" value="Heat shock protein 70kD (HSP70), C-terminal subdomain"/>
    <property type="match status" value="1"/>
</dbReference>
<dbReference type="SUPFAM" id="SSF100920">
    <property type="entry name" value="Heat shock protein 70kD (HSP70), peptide-binding domain"/>
    <property type="match status" value="1"/>
</dbReference>
<dbReference type="PROSITE" id="PS00297">
    <property type="entry name" value="HSP70_1"/>
    <property type="match status" value="1"/>
</dbReference>
<dbReference type="PROSITE" id="PS00329">
    <property type="entry name" value="HSP70_2"/>
    <property type="match status" value="1"/>
</dbReference>
<dbReference type="PROSITE" id="PS01036">
    <property type="entry name" value="HSP70_3"/>
    <property type="match status" value="1"/>
</dbReference>
<gene>
    <name type="primary">dnaK</name>
    <name type="ordered locus">spyM18_1831</name>
</gene>
<protein>
    <recommendedName>
        <fullName>Chaperone protein DnaK</fullName>
    </recommendedName>
    <alternativeName>
        <fullName>HSP70</fullName>
    </alternativeName>
    <alternativeName>
        <fullName>Heat shock 70 kDa protein</fullName>
    </alternativeName>
    <alternativeName>
        <fullName>Heat shock protein 70</fullName>
    </alternativeName>
</protein>
<feature type="initiator methionine" description="Removed" evidence="1">
    <location>
        <position position="1"/>
    </location>
</feature>
<feature type="chain" id="PRO_0000078559" description="Chaperone protein DnaK">
    <location>
        <begin position="2"/>
        <end position="608"/>
    </location>
</feature>
<feature type="region of interest" description="Disordered" evidence="2">
    <location>
        <begin position="578"/>
        <end position="608"/>
    </location>
</feature>
<feature type="compositionally biased region" description="Low complexity" evidence="2">
    <location>
        <begin position="578"/>
        <end position="598"/>
    </location>
</feature>
<feature type="compositionally biased region" description="Acidic residues" evidence="2">
    <location>
        <begin position="599"/>
        <end position="608"/>
    </location>
</feature>
<feature type="modified residue" description="Phosphothreonine; by autocatalysis" evidence="1">
    <location>
        <position position="173"/>
    </location>
</feature>
<evidence type="ECO:0000250" key="1"/>
<evidence type="ECO:0000256" key="2">
    <source>
        <dbReference type="SAM" id="MobiDB-lite"/>
    </source>
</evidence>
<evidence type="ECO:0000305" key="3"/>
<accession>P68837</accession>
<accession>P95831</accession>
<proteinExistence type="inferred from homology"/>
<name>DNAK_STRP8</name>
<keyword id="KW-0067">ATP-binding</keyword>
<keyword id="KW-0143">Chaperone</keyword>
<keyword id="KW-0547">Nucleotide-binding</keyword>
<keyword id="KW-0597">Phosphoprotein</keyword>
<keyword id="KW-0346">Stress response</keyword>